<sequence>MADLDLQRKMVSPKLHVTIPEPCKLSSVSSPISSSSSAACSAYELYLRLPELRNLWSSLYFPHWISEPVLKPALQALEITFRLILTVASDTRPYINRREWIRRLDSLTTSQIKIVAAICGDEDNYEENVSAAPVSNGWSSLSLLSEIATCRTSESVGQKILSTIENEMRWCKYTLGLGEPNLAGKPYLQYDAVCLPEELHSLKNNPYADHIENQENQMLYTSHQILESWIYVSVNLLYRIESRIEEGKFEKASSDVYLLERIWKLLSEIEDLHILMDPEDFLKVKKQLQIKSTFPNDAFCFRSKGLVEMAKMSKELRQKVPAVLEVEVDPTGGPRLQEAAMKLYSRKTEYEKIHLLQGMQAVESAAKRFFFGYQKLVAAMIGNAEANANRTVANHESYDSLTQVFMEPPYYPSLDAAKTFLGEFWSQL</sequence>
<evidence type="ECO:0000250" key="1"/>
<evidence type="ECO:0000269" key="2">
    <source>
    </source>
</evidence>
<evidence type="ECO:0000305" key="3"/>
<feature type="chain" id="PRO_0000412196" description="Nematode resistance protein-like HSPRO1">
    <location>
        <begin position="1"/>
        <end position="428"/>
    </location>
</feature>
<feature type="sequence conflict" description="In Ref. 5; AAM62622." evidence="3" ref="5">
    <original>E</original>
    <variation>D</variation>
    <location>
        <position position="126"/>
    </location>
</feature>
<feature type="sequence conflict" description="In Ref. 5; AAM62622." evidence="3" ref="5">
    <original>A</original>
    <variation>S</variation>
    <location>
        <position position="131"/>
    </location>
</feature>
<feature type="sequence conflict" description="In Ref. 5; AAM62622." evidence="3" ref="5">
    <original>S</original>
    <variation>C</variation>
    <location>
        <position position="142"/>
    </location>
</feature>
<feature type="sequence conflict" description="In Ref. 5; AAM62622." evidence="3" ref="5">
    <original>V</original>
    <variation>I</variation>
    <location>
        <position position="156"/>
    </location>
</feature>
<feature type="sequence conflict" description="In Ref. 5; AAM62622." evidence="3" ref="5">
    <original>S</original>
    <variation>I</variation>
    <location>
        <position position="222"/>
    </location>
</feature>
<feature type="sequence conflict" description="In Ref. 1; ABA12452." evidence="3" ref="1">
    <original>S</original>
    <variation>T</variation>
    <location>
        <position position="364"/>
    </location>
</feature>
<feature type="sequence conflict" description="In Ref. 5; AAM62622." evidence="3" ref="5">
    <original>G</original>
    <variation>E</variation>
    <location>
        <position position="382"/>
    </location>
</feature>
<accession>Q9LY61</accession>
<accession>Q2QCL4</accession>
<accession>Q8LEJ2</accession>
<dbReference type="EMBL" id="DQ132634">
    <property type="protein sequence ID" value="ABA12452.1"/>
    <property type="molecule type" value="mRNA"/>
</dbReference>
<dbReference type="EMBL" id="AL163832">
    <property type="protein sequence ID" value="CAB87838.1"/>
    <property type="molecule type" value="Genomic_DNA"/>
</dbReference>
<dbReference type="EMBL" id="CP002686">
    <property type="protein sequence ID" value="AEE79447.1"/>
    <property type="molecule type" value="Genomic_DNA"/>
</dbReference>
<dbReference type="EMBL" id="AY034950">
    <property type="protein sequence ID" value="AAK59456.1"/>
    <property type="molecule type" value="mRNA"/>
</dbReference>
<dbReference type="EMBL" id="AY070026">
    <property type="protein sequence ID" value="AAL47497.1"/>
    <property type="molecule type" value="mRNA"/>
</dbReference>
<dbReference type="EMBL" id="AY085394">
    <property type="protein sequence ID" value="AAM62622.1"/>
    <property type="molecule type" value="mRNA"/>
</dbReference>
<dbReference type="PIR" id="T49196">
    <property type="entry name" value="T49196"/>
</dbReference>
<dbReference type="RefSeq" id="NP_191143.1">
    <property type="nucleotide sequence ID" value="NM_115442.2"/>
</dbReference>
<dbReference type="BioGRID" id="10066">
    <property type="interactions" value="2"/>
</dbReference>
<dbReference type="FunCoup" id="Q9LY61">
    <property type="interactions" value="17"/>
</dbReference>
<dbReference type="IntAct" id="Q9LY61">
    <property type="interactions" value="6"/>
</dbReference>
<dbReference type="STRING" id="3702.Q9LY61"/>
<dbReference type="GlyGen" id="Q9LY61">
    <property type="glycosylation" value="1 site"/>
</dbReference>
<dbReference type="PaxDb" id="3702-AT3G55840.1"/>
<dbReference type="ProteomicsDB" id="232152"/>
<dbReference type="DNASU" id="824750"/>
<dbReference type="EnsemblPlants" id="AT3G55840.1">
    <property type="protein sequence ID" value="AT3G55840.1"/>
    <property type="gene ID" value="AT3G55840"/>
</dbReference>
<dbReference type="GeneID" id="824750"/>
<dbReference type="Gramene" id="AT3G55840.1">
    <property type="protein sequence ID" value="AT3G55840.1"/>
    <property type="gene ID" value="AT3G55840"/>
</dbReference>
<dbReference type="KEGG" id="ath:AT3G55840"/>
<dbReference type="Araport" id="AT3G55840"/>
<dbReference type="TAIR" id="AT3G55840"/>
<dbReference type="eggNOG" id="ENOG502QVKI">
    <property type="taxonomic scope" value="Eukaryota"/>
</dbReference>
<dbReference type="HOGENOM" id="CLU_036144_0_0_1"/>
<dbReference type="InParanoid" id="Q9LY61"/>
<dbReference type="OMA" id="ESWIYVS"/>
<dbReference type="PhylomeDB" id="Q9LY61"/>
<dbReference type="PRO" id="PR:Q9LY61"/>
<dbReference type="Proteomes" id="UP000006548">
    <property type="component" value="Chromosome 3"/>
</dbReference>
<dbReference type="ExpressionAtlas" id="Q9LY61">
    <property type="expression patterns" value="baseline and differential"/>
</dbReference>
<dbReference type="GO" id="GO:0005737">
    <property type="term" value="C:cytoplasm"/>
    <property type="evidence" value="ECO:0007669"/>
    <property type="project" value="UniProtKB-SubCell"/>
</dbReference>
<dbReference type="GO" id="GO:0020037">
    <property type="term" value="F:heme binding"/>
    <property type="evidence" value="ECO:0007669"/>
    <property type="project" value="InterPro"/>
</dbReference>
<dbReference type="GO" id="GO:0046872">
    <property type="term" value="F:metal ion binding"/>
    <property type="evidence" value="ECO:0007669"/>
    <property type="project" value="InterPro"/>
</dbReference>
<dbReference type="GO" id="GO:0006952">
    <property type="term" value="P:defense response"/>
    <property type="evidence" value="ECO:0007669"/>
    <property type="project" value="UniProtKB-KW"/>
</dbReference>
<dbReference type="GO" id="GO:0019441">
    <property type="term" value="P:L-tryptophan catabolic process to kynurenine"/>
    <property type="evidence" value="ECO:0007669"/>
    <property type="project" value="InterPro"/>
</dbReference>
<dbReference type="Gene3D" id="1.20.58.480">
    <property type="match status" value="1"/>
</dbReference>
<dbReference type="InterPro" id="IPR009743">
    <property type="entry name" value="Hs1pro-1_C"/>
</dbReference>
<dbReference type="InterPro" id="IPR038759">
    <property type="entry name" value="HSPRO1/HSPRO2"/>
</dbReference>
<dbReference type="InterPro" id="IPR009869">
    <property type="entry name" value="HSPRO1_N"/>
</dbReference>
<dbReference type="InterPro" id="IPR037217">
    <property type="entry name" value="Trp/Indoleamine_2_3_dOase-like"/>
</dbReference>
<dbReference type="PANTHER" id="PTHR34795">
    <property type="entry name" value="NEMATODE RESISTANCE PROTEIN-LIKE HSPRO1"/>
    <property type="match status" value="1"/>
</dbReference>
<dbReference type="PANTHER" id="PTHR34795:SF1">
    <property type="entry name" value="NEMATODE RESISTANCE PROTEIN-LIKE HSPRO1"/>
    <property type="match status" value="1"/>
</dbReference>
<dbReference type="Pfam" id="PF07014">
    <property type="entry name" value="Hs1pro-1_C"/>
    <property type="match status" value="1"/>
</dbReference>
<dbReference type="Pfam" id="PF07231">
    <property type="entry name" value="Hs1pro-1_N"/>
    <property type="match status" value="1"/>
</dbReference>
<dbReference type="SUPFAM" id="SSF140959">
    <property type="entry name" value="Indolic compounds 2,3-dioxygenase-like"/>
    <property type="match status" value="1"/>
</dbReference>
<organism>
    <name type="scientific">Arabidopsis thaliana</name>
    <name type="common">Mouse-ear cress</name>
    <dbReference type="NCBI Taxonomy" id="3702"/>
    <lineage>
        <taxon>Eukaryota</taxon>
        <taxon>Viridiplantae</taxon>
        <taxon>Streptophyta</taxon>
        <taxon>Embryophyta</taxon>
        <taxon>Tracheophyta</taxon>
        <taxon>Spermatophyta</taxon>
        <taxon>Magnoliopsida</taxon>
        <taxon>eudicotyledons</taxon>
        <taxon>Gunneridae</taxon>
        <taxon>Pentapetalae</taxon>
        <taxon>rosids</taxon>
        <taxon>malvids</taxon>
        <taxon>Brassicales</taxon>
        <taxon>Brassicaceae</taxon>
        <taxon>Camelineae</taxon>
        <taxon>Arabidopsis</taxon>
    </lineage>
</organism>
<protein>
    <recommendedName>
        <fullName>Nematode resistance protein-like HSPRO1</fullName>
    </recommendedName>
    <alternativeName>
        <fullName>AKINbetagamma-interacting protein 1</fullName>
    </alternativeName>
    <alternativeName>
        <fullName>Ortholog of sugar beet HS1 PRO-1 protein 1</fullName>
    </alternativeName>
    <alternativeName>
        <fullName>Protein Hs1pro-1</fullName>
    </alternativeName>
</protein>
<reference key="1">
    <citation type="journal article" date="2006" name="Plant Physiol.">
        <title>AKINbetagamma contributes to SnRK1 heterotrimeric complexes and interacts with two proteins implicated in plant pathogen resistance through its KIS/GBD sequence.</title>
        <authorList>
            <person name="Gissot L."/>
            <person name="Polge C."/>
            <person name="Jossier M."/>
            <person name="Girin T."/>
            <person name="Bouly J.-P."/>
            <person name="Kreis M."/>
            <person name="Thomas M."/>
        </authorList>
    </citation>
    <scope>NUCLEOTIDE SEQUENCE [MRNA]</scope>
    <scope>INTERACTION WITH SNF4</scope>
    <scope>SUBCELLULAR LOCATION</scope>
</reference>
<reference key="2">
    <citation type="journal article" date="2000" name="Nature">
        <title>Sequence and analysis of chromosome 3 of the plant Arabidopsis thaliana.</title>
        <authorList>
            <person name="Salanoubat M."/>
            <person name="Lemcke K."/>
            <person name="Rieger M."/>
            <person name="Ansorge W."/>
            <person name="Unseld M."/>
            <person name="Fartmann B."/>
            <person name="Valle G."/>
            <person name="Bloecker H."/>
            <person name="Perez-Alonso M."/>
            <person name="Obermaier B."/>
            <person name="Delseny M."/>
            <person name="Boutry M."/>
            <person name="Grivell L.A."/>
            <person name="Mache R."/>
            <person name="Puigdomenech P."/>
            <person name="De Simone V."/>
            <person name="Choisne N."/>
            <person name="Artiguenave F."/>
            <person name="Robert C."/>
            <person name="Brottier P."/>
            <person name="Wincker P."/>
            <person name="Cattolico L."/>
            <person name="Weissenbach J."/>
            <person name="Saurin W."/>
            <person name="Quetier F."/>
            <person name="Schaefer M."/>
            <person name="Mueller-Auer S."/>
            <person name="Gabel C."/>
            <person name="Fuchs M."/>
            <person name="Benes V."/>
            <person name="Wurmbach E."/>
            <person name="Drzonek H."/>
            <person name="Erfle H."/>
            <person name="Jordan N."/>
            <person name="Bangert S."/>
            <person name="Wiedelmann R."/>
            <person name="Kranz H."/>
            <person name="Voss H."/>
            <person name="Holland R."/>
            <person name="Brandt P."/>
            <person name="Nyakatura G."/>
            <person name="Vezzi A."/>
            <person name="D'Angelo M."/>
            <person name="Pallavicini A."/>
            <person name="Toppo S."/>
            <person name="Simionati B."/>
            <person name="Conrad A."/>
            <person name="Hornischer K."/>
            <person name="Kauer G."/>
            <person name="Loehnert T.-H."/>
            <person name="Nordsiek G."/>
            <person name="Reichelt J."/>
            <person name="Scharfe M."/>
            <person name="Schoen O."/>
            <person name="Bargues M."/>
            <person name="Terol J."/>
            <person name="Climent J."/>
            <person name="Navarro P."/>
            <person name="Collado C."/>
            <person name="Perez-Perez A."/>
            <person name="Ottenwaelder B."/>
            <person name="Duchemin D."/>
            <person name="Cooke R."/>
            <person name="Laudie M."/>
            <person name="Berger-Llauro C."/>
            <person name="Purnelle B."/>
            <person name="Masuy D."/>
            <person name="de Haan M."/>
            <person name="Maarse A.C."/>
            <person name="Alcaraz J.-P."/>
            <person name="Cottet A."/>
            <person name="Casacuberta E."/>
            <person name="Monfort A."/>
            <person name="Argiriou A."/>
            <person name="Flores M."/>
            <person name="Liguori R."/>
            <person name="Vitale D."/>
            <person name="Mannhaupt G."/>
            <person name="Haase D."/>
            <person name="Schoof H."/>
            <person name="Rudd S."/>
            <person name="Zaccaria P."/>
            <person name="Mewes H.-W."/>
            <person name="Mayer K.F.X."/>
            <person name="Kaul S."/>
            <person name="Town C.D."/>
            <person name="Koo H.L."/>
            <person name="Tallon L.J."/>
            <person name="Jenkins J."/>
            <person name="Rooney T."/>
            <person name="Rizzo M."/>
            <person name="Walts A."/>
            <person name="Utterback T."/>
            <person name="Fujii C.Y."/>
            <person name="Shea T.P."/>
            <person name="Creasy T.H."/>
            <person name="Haas B."/>
            <person name="Maiti R."/>
            <person name="Wu D."/>
            <person name="Peterson J."/>
            <person name="Van Aken S."/>
            <person name="Pai G."/>
            <person name="Militscher J."/>
            <person name="Sellers P."/>
            <person name="Gill J.E."/>
            <person name="Feldblyum T.V."/>
            <person name="Preuss D."/>
            <person name="Lin X."/>
            <person name="Nierman W.C."/>
            <person name="Salzberg S.L."/>
            <person name="White O."/>
            <person name="Venter J.C."/>
            <person name="Fraser C.M."/>
            <person name="Kaneko T."/>
            <person name="Nakamura Y."/>
            <person name="Sato S."/>
            <person name="Kato T."/>
            <person name="Asamizu E."/>
            <person name="Sasamoto S."/>
            <person name="Kimura T."/>
            <person name="Idesawa K."/>
            <person name="Kawashima K."/>
            <person name="Kishida Y."/>
            <person name="Kiyokawa C."/>
            <person name="Kohara M."/>
            <person name="Matsumoto M."/>
            <person name="Matsuno A."/>
            <person name="Muraki A."/>
            <person name="Nakayama S."/>
            <person name="Nakazaki N."/>
            <person name="Shinpo S."/>
            <person name="Takeuchi C."/>
            <person name="Wada T."/>
            <person name="Watanabe A."/>
            <person name="Yamada M."/>
            <person name="Yasuda M."/>
            <person name="Tabata S."/>
        </authorList>
    </citation>
    <scope>NUCLEOTIDE SEQUENCE [LARGE SCALE GENOMIC DNA]</scope>
    <source>
        <strain>cv. Columbia</strain>
    </source>
</reference>
<reference key="3">
    <citation type="journal article" date="2017" name="Plant J.">
        <title>Araport11: a complete reannotation of the Arabidopsis thaliana reference genome.</title>
        <authorList>
            <person name="Cheng C.Y."/>
            <person name="Krishnakumar V."/>
            <person name="Chan A.P."/>
            <person name="Thibaud-Nissen F."/>
            <person name="Schobel S."/>
            <person name="Town C.D."/>
        </authorList>
    </citation>
    <scope>GENOME REANNOTATION</scope>
    <source>
        <strain>cv. Columbia</strain>
    </source>
</reference>
<reference key="4">
    <citation type="journal article" date="2003" name="Science">
        <title>Empirical analysis of transcriptional activity in the Arabidopsis genome.</title>
        <authorList>
            <person name="Yamada K."/>
            <person name="Lim J."/>
            <person name="Dale J.M."/>
            <person name="Chen H."/>
            <person name="Shinn P."/>
            <person name="Palm C.J."/>
            <person name="Southwick A.M."/>
            <person name="Wu H.C."/>
            <person name="Kim C.J."/>
            <person name="Nguyen M."/>
            <person name="Pham P.K."/>
            <person name="Cheuk R.F."/>
            <person name="Karlin-Newmann G."/>
            <person name="Liu S.X."/>
            <person name="Lam B."/>
            <person name="Sakano H."/>
            <person name="Wu T."/>
            <person name="Yu G."/>
            <person name="Miranda M."/>
            <person name="Quach H.L."/>
            <person name="Tripp M."/>
            <person name="Chang C.H."/>
            <person name="Lee J.M."/>
            <person name="Toriumi M.J."/>
            <person name="Chan M.M."/>
            <person name="Tang C.C."/>
            <person name="Onodera C.S."/>
            <person name="Deng J.M."/>
            <person name="Akiyama K."/>
            <person name="Ansari Y."/>
            <person name="Arakawa T."/>
            <person name="Banh J."/>
            <person name="Banno F."/>
            <person name="Bowser L."/>
            <person name="Brooks S.Y."/>
            <person name="Carninci P."/>
            <person name="Chao Q."/>
            <person name="Choy N."/>
            <person name="Enju A."/>
            <person name="Goldsmith A.D."/>
            <person name="Gurjal M."/>
            <person name="Hansen N.F."/>
            <person name="Hayashizaki Y."/>
            <person name="Johnson-Hopson C."/>
            <person name="Hsuan V.W."/>
            <person name="Iida K."/>
            <person name="Karnes M."/>
            <person name="Khan S."/>
            <person name="Koesema E."/>
            <person name="Ishida J."/>
            <person name="Jiang P.X."/>
            <person name="Jones T."/>
            <person name="Kawai J."/>
            <person name="Kamiya A."/>
            <person name="Meyers C."/>
            <person name="Nakajima M."/>
            <person name="Narusaka M."/>
            <person name="Seki M."/>
            <person name="Sakurai T."/>
            <person name="Satou M."/>
            <person name="Tamse R."/>
            <person name="Vaysberg M."/>
            <person name="Wallender E.K."/>
            <person name="Wong C."/>
            <person name="Yamamura Y."/>
            <person name="Yuan S."/>
            <person name="Shinozaki K."/>
            <person name="Davis R.W."/>
            <person name="Theologis A."/>
            <person name="Ecker J.R."/>
        </authorList>
    </citation>
    <scope>NUCLEOTIDE SEQUENCE [LARGE SCALE MRNA]</scope>
    <source>
        <strain>cv. Columbia</strain>
    </source>
</reference>
<reference key="5">
    <citation type="submission" date="2002-03" db="EMBL/GenBank/DDBJ databases">
        <title>Full-length cDNA from Arabidopsis thaliana.</title>
        <authorList>
            <person name="Brover V.V."/>
            <person name="Troukhan M.E."/>
            <person name="Alexandrov N.A."/>
            <person name="Lu Y.-P."/>
            <person name="Flavell R.B."/>
            <person name="Feldmann K.A."/>
        </authorList>
    </citation>
    <scope>NUCLEOTIDE SEQUENCE [LARGE SCALE MRNA]</scope>
</reference>
<gene>
    <name type="primary">HSPRO1</name>
    <name type="ordered locus">At3g55840</name>
    <name type="ORF">F27K19.20</name>
</gene>
<proteinExistence type="evidence at protein level"/>
<name>HSPR1_ARATH</name>
<comment type="function">
    <text evidence="1">Positive regulator of basal resistance.</text>
</comment>
<comment type="subunit">
    <text evidence="2">Interacts with SNF4.</text>
</comment>
<comment type="interaction">
    <interactant intactId="EBI-2360790">
        <id>Q9LY61</id>
    </interactant>
    <interactant intactId="EBI-2360649">
        <id>Q944A6</id>
        <label>SNF4</label>
    </interactant>
    <organismsDiffer>false</organismsDiffer>
    <experiments>5</experiments>
</comment>
<comment type="subcellular location">
    <subcellularLocation>
        <location evidence="2">Cytoplasm</location>
    </subcellularLocation>
</comment>
<keyword id="KW-0963">Cytoplasm</keyword>
<keyword id="KW-0611">Plant defense</keyword>
<keyword id="KW-1185">Reference proteome</keyword>